<protein>
    <recommendedName>
        <fullName evidence="1">DNA repair protein RecO</fullName>
    </recommendedName>
    <alternativeName>
        <fullName evidence="1">Recombination protein O</fullName>
    </alternativeName>
</protein>
<accession>Q2IWU2</accession>
<evidence type="ECO:0000255" key="1">
    <source>
        <dbReference type="HAMAP-Rule" id="MF_00201"/>
    </source>
</evidence>
<feature type="chain" id="PRO_0000264839" description="DNA repair protein RecO">
    <location>
        <begin position="1"/>
        <end position="249"/>
    </location>
</feature>
<gene>
    <name evidence="1" type="primary">recO</name>
    <name type="ordered locus">RPB_2615</name>
</gene>
<name>RECO_RHOP2</name>
<reference key="1">
    <citation type="submission" date="2006-01" db="EMBL/GenBank/DDBJ databases">
        <title>Complete sequence of Rhodopseudomonas palustris HaA2.</title>
        <authorList>
            <consortium name="US DOE Joint Genome Institute"/>
            <person name="Copeland A."/>
            <person name="Lucas S."/>
            <person name="Lapidus A."/>
            <person name="Barry K."/>
            <person name="Detter J.C."/>
            <person name="Glavina T."/>
            <person name="Hammon N."/>
            <person name="Israni S."/>
            <person name="Pitluck S."/>
            <person name="Chain P."/>
            <person name="Malfatti S."/>
            <person name="Shin M."/>
            <person name="Vergez L."/>
            <person name="Schmutz J."/>
            <person name="Larimer F."/>
            <person name="Land M."/>
            <person name="Hauser L."/>
            <person name="Pelletier D.A."/>
            <person name="Kyrpides N."/>
            <person name="Anderson I."/>
            <person name="Oda Y."/>
            <person name="Harwood C.S."/>
            <person name="Richardson P."/>
        </authorList>
    </citation>
    <scope>NUCLEOTIDE SEQUENCE [LARGE SCALE GENOMIC DNA]</scope>
    <source>
        <strain>HaA2</strain>
    </source>
</reference>
<organism>
    <name type="scientific">Rhodopseudomonas palustris (strain HaA2)</name>
    <dbReference type="NCBI Taxonomy" id="316058"/>
    <lineage>
        <taxon>Bacteria</taxon>
        <taxon>Pseudomonadati</taxon>
        <taxon>Pseudomonadota</taxon>
        <taxon>Alphaproteobacteria</taxon>
        <taxon>Hyphomicrobiales</taxon>
        <taxon>Nitrobacteraceae</taxon>
        <taxon>Rhodopseudomonas</taxon>
    </lineage>
</organism>
<proteinExistence type="inferred from homology"/>
<comment type="function">
    <text evidence="1">Involved in DNA repair and RecF pathway recombination.</text>
</comment>
<comment type="similarity">
    <text evidence="1">Belongs to the RecO family.</text>
</comment>
<sequence length="249" mass="27398">MEWSDEGIILGVRRHGEAGAIVELLTRGHGRHLGLVRGGASSRLRPLLQPGNSVLAVWRARLDEHLGYYQLEGTRMRAATMLASSHAVYGITHLASLARLLPERDPHEDIYEMLERTLDDFDDVGDAATHLIRFELAMLAELGFGLDLSACAATGATTDLIYVSPKSGGAVSRTAGEPWREKLLRLPDFLREDNDGRNGWSDQDLRDGFDLTGRFLLRNVLEPRGQGHSDARDGFINAVAKHLARAAIV</sequence>
<keyword id="KW-0227">DNA damage</keyword>
<keyword id="KW-0233">DNA recombination</keyword>
<keyword id="KW-0234">DNA repair</keyword>
<keyword id="KW-1185">Reference proteome</keyword>
<dbReference type="EMBL" id="CP000250">
    <property type="protein sequence ID" value="ABD07318.1"/>
    <property type="molecule type" value="Genomic_DNA"/>
</dbReference>
<dbReference type="RefSeq" id="WP_011441503.1">
    <property type="nucleotide sequence ID" value="NC_007778.1"/>
</dbReference>
<dbReference type="SMR" id="Q2IWU2"/>
<dbReference type="STRING" id="316058.RPB_2615"/>
<dbReference type="KEGG" id="rpb:RPB_2615"/>
<dbReference type="eggNOG" id="COG1381">
    <property type="taxonomic scope" value="Bacteria"/>
</dbReference>
<dbReference type="HOGENOM" id="CLU_086029_0_0_5"/>
<dbReference type="OrthoDB" id="9804792at2"/>
<dbReference type="Proteomes" id="UP000008809">
    <property type="component" value="Chromosome"/>
</dbReference>
<dbReference type="GO" id="GO:0043590">
    <property type="term" value="C:bacterial nucleoid"/>
    <property type="evidence" value="ECO:0007669"/>
    <property type="project" value="TreeGrafter"/>
</dbReference>
<dbReference type="GO" id="GO:0006310">
    <property type="term" value="P:DNA recombination"/>
    <property type="evidence" value="ECO:0007669"/>
    <property type="project" value="UniProtKB-UniRule"/>
</dbReference>
<dbReference type="GO" id="GO:0006302">
    <property type="term" value="P:double-strand break repair"/>
    <property type="evidence" value="ECO:0007669"/>
    <property type="project" value="TreeGrafter"/>
</dbReference>
<dbReference type="Gene3D" id="2.40.50.140">
    <property type="entry name" value="Nucleic acid-binding proteins"/>
    <property type="match status" value="1"/>
</dbReference>
<dbReference type="Gene3D" id="1.20.1440.120">
    <property type="entry name" value="Recombination protein O, C-terminal domain"/>
    <property type="match status" value="1"/>
</dbReference>
<dbReference type="HAMAP" id="MF_00201">
    <property type="entry name" value="RecO"/>
    <property type="match status" value="1"/>
</dbReference>
<dbReference type="InterPro" id="IPR037278">
    <property type="entry name" value="ARFGAP/RecO"/>
</dbReference>
<dbReference type="InterPro" id="IPR022572">
    <property type="entry name" value="DNA_rep/recomb_RecO_N"/>
</dbReference>
<dbReference type="InterPro" id="IPR012340">
    <property type="entry name" value="NA-bd_OB-fold"/>
</dbReference>
<dbReference type="InterPro" id="IPR003717">
    <property type="entry name" value="RecO"/>
</dbReference>
<dbReference type="InterPro" id="IPR042242">
    <property type="entry name" value="RecO_C"/>
</dbReference>
<dbReference type="NCBIfam" id="TIGR00613">
    <property type="entry name" value="reco"/>
    <property type="match status" value="1"/>
</dbReference>
<dbReference type="PANTHER" id="PTHR33991">
    <property type="entry name" value="DNA REPAIR PROTEIN RECO"/>
    <property type="match status" value="1"/>
</dbReference>
<dbReference type="PANTHER" id="PTHR33991:SF1">
    <property type="entry name" value="DNA REPAIR PROTEIN RECO"/>
    <property type="match status" value="1"/>
</dbReference>
<dbReference type="Pfam" id="PF02565">
    <property type="entry name" value="RecO_C"/>
    <property type="match status" value="1"/>
</dbReference>
<dbReference type="Pfam" id="PF11967">
    <property type="entry name" value="RecO_N"/>
    <property type="match status" value="1"/>
</dbReference>
<dbReference type="SUPFAM" id="SSF57863">
    <property type="entry name" value="ArfGap/RecO-like zinc finger"/>
    <property type="match status" value="1"/>
</dbReference>
<dbReference type="SUPFAM" id="SSF50249">
    <property type="entry name" value="Nucleic acid-binding proteins"/>
    <property type="match status" value="1"/>
</dbReference>